<reference key="1">
    <citation type="journal article" date="2008" name="PLoS ONE">
        <title>Environmental adaptation: genomic analysis of the piezotolerant and psychrotolerant deep-sea iron reducing bacterium Shewanella piezotolerans WP3.</title>
        <authorList>
            <person name="Wang F."/>
            <person name="Wang J."/>
            <person name="Jian H."/>
            <person name="Zhang B."/>
            <person name="Li S."/>
            <person name="Wang F."/>
            <person name="Zeng X."/>
            <person name="Gao L."/>
            <person name="Bartlett D.H."/>
            <person name="Yu J."/>
            <person name="Hu S."/>
            <person name="Xiao X."/>
        </authorList>
    </citation>
    <scope>NUCLEOTIDE SEQUENCE [LARGE SCALE GENOMIC DNA]</scope>
    <source>
        <strain>WP3 / JCM 13877</strain>
    </source>
</reference>
<gene>
    <name evidence="1" type="primary">rimP</name>
    <name type="ordered locus">swp_1216</name>
</gene>
<protein>
    <recommendedName>
        <fullName evidence="1">Ribosome maturation factor RimP</fullName>
    </recommendedName>
</protein>
<keyword id="KW-0963">Cytoplasm</keyword>
<keyword id="KW-0690">Ribosome biogenesis</keyword>
<comment type="function">
    <text evidence="1">Required for maturation of 30S ribosomal subunits.</text>
</comment>
<comment type="subcellular location">
    <subcellularLocation>
        <location evidence="1">Cytoplasm</location>
    </subcellularLocation>
</comment>
<comment type="similarity">
    <text evidence="1">Belongs to the RimP family.</text>
</comment>
<comment type="sequence caution" evidence="2">
    <conflict type="erroneous initiation">
        <sequence resource="EMBL-CDS" id="ACJ28010"/>
    </conflict>
</comment>
<dbReference type="EMBL" id="CP000472">
    <property type="protein sequence ID" value="ACJ28010.1"/>
    <property type="status" value="ALT_INIT"/>
    <property type="molecule type" value="Genomic_DNA"/>
</dbReference>
<dbReference type="RefSeq" id="WP_044555691.1">
    <property type="nucleotide sequence ID" value="NC_011566.1"/>
</dbReference>
<dbReference type="SMR" id="B8CKH1"/>
<dbReference type="STRING" id="225849.swp_1216"/>
<dbReference type="KEGG" id="swp:swp_1216"/>
<dbReference type="eggNOG" id="COG0779">
    <property type="taxonomic scope" value="Bacteria"/>
</dbReference>
<dbReference type="HOGENOM" id="CLU_070525_1_1_6"/>
<dbReference type="OrthoDB" id="9805006at2"/>
<dbReference type="Proteomes" id="UP000000753">
    <property type="component" value="Chromosome"/>
</dbReference>
<dbReference type="GO" id="GO:0005829">
    <property type="term" value="C:cytosol"/>
    <property type="evidence" value="ECO:0007669"/>
    <property type="project" value="TreeGrafter"/>
</dbReference>
<dbReference type="GO" id="GO:0000028">
    <property type="term" value="P:ribosomal small subunit assembly"/>
    <property type="evidence" value="ECO:0007669"/>
    <property type="project" value="TreeGrafter"/>
</dbReference>
<dbReference type="GO" id="GO:0006412">
    <property type="term" value="P:translation"/>
    <property type="evidence" value="ECO:0007669"/>
    <property type="project" value="TreeGrafter"/>
</dbReference>
<dbReference type="CDD" id="cd01734">
    <property type="entry name" value="YlxS_C"/>
    <property type="match status" value="1"/>
</dbReference>
<dbReference type="FunFam" id="3.30.300.70:FF:000001">
    <property type="entry name" value="Ribosome maturation factor RimP"/>
    <property type="match status" value="1"/>
</dbReference>
<dbReference type="Gene3D" id="2.30.30.180">
    <property type="entry name" value="Ribosome maturation factor RimP, C-terminal domain"/>
    <property type="match status" value="1"/>
</dbReference>
<dbReference type="Gene3D" id="3.30.300.70">
    <property type="entry name" value="RimP-like superfamily, N-terminal"/>
    <property type="match status" value="1"/>
</dbReference>
<dbReference type="HAMAP" id="MF_01077">
    <property type="entry name" value="RimP"/>
    <property type="match status" value="1"/>
</dbReference>
<dbReference type="InterPro" id="IPR003728">
    <property type="entry name" value="Ribosome_maturation_RimP"/>
</dbReference>
<dbReference type="InterPro" id="IPR028998">
    <property type="entry name" value="RimP_C"/>
</dbReference>
<dbReference type="InterPro" id="IPR036847">
    <property type="entry name" value="RimP_C_sf"/>
</dbReference>
<dbReference type="InterPro" id="IPR028989">
    <property type="entry name" value="RimP_N"/>
</dbReference>
<dbReference type="InterPro" id="IPR035956">
    <property type="entry name" value="RimP_N_sf"/>
</dbReference>
<dbReference type="NCBIfam" id="NF000927">
    <property type="entry name" value="PRK00092.1-1"/>
    <property type="match status" value="1"/>
</dbReference>
<dbReference type="PANTHER" id="PTHR33867">
    <property type="entry name" value="RIBOSOME MATURATION FACTOR RIMP"/>
    <property type="match status" value="1"/>
</dbReference>
<dbReference type="PANTHER" id="PTHR33867:SF1">
    <property type="entry name" value="RIBOSOME MATURATION FACTOR RIMP"/>
    <property type="match status" value="1"/>
</dbReference>
<dbReference type="Pfam" id="PF17384">
    <property type="entry name" value="DUF150_C"/>
    <property type="match status" value="1"/>
</dbReference>
<dbReference type="Pfam" id="PF02576">
    <property type="entry name" value="RimP_N"/>
    <property type="match status" value="1"/>
</dbReference>
<dbReference type="SUPFAM" id="SSF74942">
    <property type="entry name" value="YhbC-like, C-terminal domain"/>
    <property type="match status" value="1"/>
</dbReference>
<dbReference type="SUPFAM" id="SSF75420">
    <property type="entry name" value="YhbC-like, N-terminal domain"/>
    <property type="match status" value="1"/>
</dbReference>
<name>RIMP_SHEPW</name>
<sequence>MATLERKLVEMLKAPVEALGHELWGLEYIQAGKHSILRLYIDNEKGIFIEDCAETSRQVSAVMDVEDPISTEYTLEVSSPGVDRPLFTAEQYQLYIGETVKVQVTMPVAGSRNLKGTVIGIEGQMLTLSVDGNELIIALDNIRKGNLIAKF</sequence>
<feature type="chain" id="PRO_0000384771" description="Ribosome maturation factor RimP">
    <location>
        <begin position="1"/>
        <end position="151"/>
    </location>
</feature>
<evidence type="ECO:0000255" key="1">
    <source>
        <dbReference type="HAMAP-Rule" id="MF_01077"/>
    </source>
</evidence>
<evidence type="ECO:0000305" key="2"/>
<accession>B8CKH1</accession>
<organism>
    <name type="scientific">Shewanella piezotolerans (strain WP3 / JCM 13877)</name>
    <dbReference type="NCBI Taxonomy" id="225849"/>
    <lineage>
        <taxon>Bacteria</taxon>
        <taxon>Pseudomonadati</taxon>
        <taxon>Pseudomonadota</taxon>
        <taxon>Gammaproteobacteria</taxon>
        <taxon>Alteromonadales</taxon>
        <taxon>Shewanellaceae</taxon>
        <taxon>Shewanella</taxon>
    </lineage>
</organism>
<proteinExistence type="inferred from homology"/>